<proteinExistence type="inferred from homology"/>
<reference key="1">
    <citation type="journal article" date="2003" name="Proc. Natl. Acad. Sci. U.S.A.">
        <title>The genome of Nanoarchaeum equitans: insights into early archaeal evolution and derived parasitism.</title>
        <authorList>
            <person name="Waters E."/>
            <person name="Hohn M.J."/>
            <person name="Ahel I."/>
            <person name="Graham D.E."/>
            <person name="Adams M.D."/>
            <person name="Barnstead M."/>
            <person name="Beeson K.Y."/>
            <person name="Bibbs L."/>
            <person name="Bolanos R."/>
            <person name="Keller M."/>
            <person name="Kretz K."/>
            <person name="Lin X."/>
            <person name="Mathur E."/>
            <person name="Ni J."/>
            <person name="Podar M."/>
            <person name="Richardson T."/>
            <person name="Sutton G.G."/>
            <person name="Simon M."/>
            <person name="Soell D."/>
            <person name="Stetter K.O."/>
            <person name="Short J.M."/>
            <person name="Noorderwier M."/>
        </authorList>
    </citation>
    <scope>NUCLEOTIDE SEQUENCE [LARGE SCALE GENOMIC DNA]</scope>
    <source>
        <strain>Kin4-M</strain>
    </source>
</reference>
<name>DP2L_NANEQ</name>
<keyword id="KW-0235">DNA replication</keyword>
<keyword id="KW-0238">DNA-binding</keyword>
<keyword id="KW-0239">DNA-directed DNA polymerase</keyword>
<keyword id="KW-0269">Exonuclease</keyword>
<keyword id="KW-0378">Hydrolase</keyword>
<keyword id="KW-0511">Multifunctional enzyme</keyword>
<keyword id="KW-0540">Nuclease</keyword>
<keyword id="KW-0548">Nucleotidyltransferase</keyword>
<keyword id="KW-1185">Reference proteome</keyword>
<keyword id="KW-0808">Transferase</keyword>
<protein>
    <recommendedName>
        <fullName evidence="2">DNA polymerase II large subunit</fullName>
        <shortName evidence="2">Pol II</shortName>
        <ecNumber evidence="2">2.7.7.7</ecNumber>
    </recommendedName>
    <alternativeName>
        <fullName evidence="2">Exodeoxyribonuclease large subunit</fullName>
        <ecNumber evidence="2">3.1.11.1</ecNumber>
    </alternativeName>
</protein>
<sequence length="1243" mass="142593">MVYYDILAKELEKLYEIAEKARAQGYDPKDIVEIPLANNMGERVAHLISAIHEQLDVKKTAELILELEKQYGFLDWRVGLKLIDYALEGKLIPYDDILKRIDLGVRLALGYITMGVVSAPLEGLVELRIKKRKDGKPYLALYYAGPIRGAGGTAAAVSVLFADYARKKAGLYEYDPTKEEIERYKIEIDSYHNKVARLQYKPSDEEIEFLVKHIPVEINGDPTSDKEVPSYKNLERVETNRIRGGMCLVIAEGIAQKAKKIYGKITEWGKEFGLEHWEFLGEYLKLQKEIQAKLAAESGGEIEGKEIKRKITLFLDEIKKEEITVKYPTPAGKYLQEITAGRPIFSLPMAIGGFRLRYGRSFATGFATSGIHPATMFLTYGFLAIGTQMRGERPKKSTIVTPVTSLHPPIVKLKDGTVKKVHSVVEAIKIANDVEEILFLGDILTAFGDWLNEKANLVPSPYVEEWWIQEFDRAAMKKTDYKIEFDVMKPRKLFKIEGLENLSQYLGIPKDRLEEIIRKPFSRKPTIDEAITISEKLGIPLHPEYTPFWVHITKEELIKLIEELRKAKIQNNKIYFHESQKELKAILEKLFIEHFREGEYFYINESMTKSLLYQLDNLNLEKAKKEFDNAIDALDLVNRLSPIEIRDVAGVYVGFRAGRPEKAKMREMTGRPHGLFPVGEEGGKMRNVIEAYNKGYVKAEFALYYCNHCKRYTIYRKCEVCGNKTKEVYVCKEIINRLKTSLFKQYKDWKKVEEEIASHLWAEAVTHSKNNCREPKRYSLIKLNIKHYVDRAVQKLKLFNIPKLVKGVRGTSNKDHIVERLEKAFLRSVSDVYVNKDGTIRYDGTQIPLTHFRPKDLIGVTIEKLKELGYTHDIYGNPLEREDQILQLKPQDIILPYGILVKSRLNKNKIVRTDAAEAFKKVANFVDEELKRLYNLEPYYNIEKAEDLIGKIVFGIAPHTSAAVVGRIIGFTPIQGIIAHPIWHAGQRRNCDGDETAVMLGLDALINFSREYLPDKRGARTMDAPLVLTLKLELKAVDDEVHDMDIVYNYPLEFYYETLKGSPAKDVKKQCGILTLGDFLKEEDISKIPIGFTHPTKSIRLGNKVSLYKRLKTMQQKTEWQLKLAERIRAVDENIVAEIVIEKHFMPDIKGNLRGFSSQVFRCTKCDTTYDRVPLSGKCPKCGGNIVFTVHEGTIKKYLPTSLYLARKYKIKKFTKQSLFLLDRRIKQIFGGEKKSLADFINS</sequence>
<evidence type="ECO:0000250" key="1"/>
<evidence type="ECO:0000255" key="2">
    <source>
        <dbReference type="HAMAP-Rule" id="MF_00324"/>
    </source>
</evidence>
<organism>
    <name type="scientific">Nanoarchaeum equitans (strain Kin4-M)</name>
    <dbReference type="NCBI Taxonomy" id="228908"/>
    <lineage>
        <taxon>Archaea</taxon>
        <taxon>Nanobdellota</taxon>
        <taxon>Candidatus Nanoarchaeia</taxon>
        <taxon>Nanoarchaeales</taxon>
        <taxon>Nanoarchaeaceae</taxon>
        <taxon>Nanoarchaeum</taxon>
    </lineage>
</organism>
<dbReference type="EC" id="2.7.7.7" evidence="2"/>
<dbReference type="EC" id="3.1.11.1" evidence="2"/>
<dbReference type="EMBL" id="AE017199">
    <property type="protein sequence ID" value="AAR39264.1"/>
    <property type="molecule type" value="Genomic_DNA"/>
</dbReference>
<dbReference type="SMR" id="Q74N29"/>
<dbReference type="STRING" id="228908.NEQ420"/>
<dbReference type="EnsemblBacteria" id="AAR39264">
    <property type="protein sequence ID" value="AAR39264"/>
    <property type="gene ID" value="NEQ420"/>
</dbReference>
<dbReference type="KEGG" id="neq:NEQ420"/>
<dbReference type="PATRIC" id="fig|228908.8.peg.428"/>
<dbReference type="HOGENOM" id="CLU_001154_0_0_2"/>
<dbReference type="Proteomes" id="UP000000578">
    <property type="component" value="Chromosome"/>
</dbReference>
<dbReference type="GO" id="GO:0003677">
    <property type="term" value="F:DNA binding"/>
    <property type="evidence" value="ECO:0007669"/>
    <property type="project" value="UniProtKB-UniRule"/>
</dbReference>
<dbReference type="GO" id="GO:0003887">
    <property type="term" value="F:DNA-directed DNA polymerase activity"/>
    <property type="evidence" value="ECO:0007669"/>
    <property type="project" value="UniProtKB-UniRule"/>
</dbReference>
<dbReference type="GO" id="GO:0008310">
    <property type="term" value="F:single-stranded DNA 3'-5' DNA exonuclease activity"/>
    <property type="evidence" value="ECO:0007669"/>
    <property type="project" value="UniProtKB-EC"/>
</dbReference>
<dbReference type="GO" id="GO:0006308">
    <property type="term" value="P:DNA catabolic process"/>
    <property type="evidence" value="ECO:0007669"/>
    <property type="project" value="UniProtKB-UniRule"/>
</dbReference>
<dbReference type="GO" id="GO:0006261">
    <property type="term" value="P:DNA-templated DNA replication"/>
    <property type="evidence" value="ECO:0007669"/>
    <property type="project" value="UniProtKB-UniRule"/>
</dbReference>
<dbReference type="HAMAP" id="MF_00324">
    <property type="entry name" value="DNApol_II_L_arch"/>
    <property type="match status" value="1"/>
</dbReference>
<dbReference type="InterPro" id="IPR004475">
    <property type="entry name" value="PolC_DP2"/>
</dbReference>
<dbReference type="InterPro" id="IPR056172">
    <property type="entry name" value="PolC_DP2_cat_dom"/>
</dbReference>
<dbReference type="InterPro" id="IPR056171">
    <property type="entry name" value="PolC_DP2_central_dom"/>
</dbReference>
<dbReference type="InterPro" id="IPR016033">
    <property type="entry name" value="PolC_DP2_N"/>
</dbReference>
<dbReference type="NCBIfam" id="TIGR00354">
    <property type="entry name" value="polC"/>
    <property type="match status" value="1"/>
</dbReference>
<dbReference type="NCBIfam" id="NF003103">
    <property type="entry name" value="PRK04023.1"/>
    <property type="match status" value="1"/>
</dbReference>
<dbReference type="PANTHER" id="PTHR42210">
    <property type="entry name" value="DNA POLYMERASE II LARGE SUBUNIT"/>
    <property type="match status" value="1"/>
</dbReference>
<dbReference type="PANTHER" id="PTHR42210:SF1">
    <property type="entry name" value="DNA POLYMERASE II LARGE SUBUNIT"/>
    <property type="match status" value="1"/>
</dbReference>
<dbReference type="Pfam" id="PF24846">
    <property type="entry name" value="PolC_DP2_cat"/>
    <property type="match status" value="1"/>
</dbReference>
<dbReference type="Pfam" id="PF24844">
    <property type="entry name" value="PolC_DP2_central"/>
    <property type="match status" value="1"/>
</dbReference>
<dbReference type="Pfam" id="PF03833">
    <property type="entry name" value="PolC_DP2_N"/>
    <property type="match status" value="1"/>
</dbReference>
<dbReference type="PIRSF" id="PIRSF016275">
    <property type="entry name" value="PolC_DP2"/>
    <property type="match status" value="1"/>
</dbReference>
<gene>
    <name evidence="2" type="primary">polC</name>
    <name type="ordered locus">NEQ420</name>
</gene>
<accession>Q74N29</accession>
<comment type="function">
    <text evidence="1">Possesses two activities: a DNA synthesis (polymerase) and an exonucleolytic activity that degrades single-stranded DNA in the 3'- to 5'-direction. Has a template-primer preference which is characteristic of a replicative DNA polymerase (By similarity).</text>
</comment>
<comment type="catalytic activity">
    <reaction evidence="2">
        <text>DNA(n) + a 2'-deoxyribonucleoside 5'-triphosphate = DNA(n+1) + diphosphate</text>
        <dbReference type="Rhea" id="RHEA:22508"/>
        <dbReference type="Rhea" id="RHEA-COMP:17339"/>
        <dbReference type="Rhea" id="RHEA-COMP:17340"/>
        <dbReference type="ChEBI" id="CHEBI:33019"/>
        <dbReference type="ChEBI" id="CHEBI:61560"/>
        <dbReference type="ChEBI" id="CHEBI:173112"/>
        <dbReference type="EC" id="2.7.7.7"/>
    </reaction>
</comment>
<comment type="catalytic activity">
    <reaction evidence="2">
        <text>Exonucleolytic cleavage in the 3'- to 5'-direction to yield nucleoside 5'-phosphates.</text>
        <dbReference type="EC" id="3.1.11.1"/>
    </reaction>
</comment>
<comment type="subunit">
    <text evidence="2">Heterodimer of a large subunit and a small subunit.</text>
</comment>
<comment type="similarity">
    <text evidence="2">Belongs to the archaeal DNA polymerase II family.</text>
</comment>
<feature type="chain" id="PRO_0000294697" description="DNA polymerase II large subunit">
    <location>
        <begin position="1"/>
        <end position="1243"/>
    </location>
</feature>